<sequence>MVGGGSAQKLTTNDALAYLKAVKDKFQDQRGKYDEFLEVMKNFKSQRVDTAGVITRVKELFKGHQELILGFNTFLPKGFEITLQPEDGQPPLKKRVEFEEAISFVNKIKTRFQGDDRVYKSFLDILNMYRRDSKSITEVYQEVAILFRDHSDLLVEFTHFLPDTSATASIPSVKTSVRERGVSLADKKDRIITPHPDHDYGTEHIDQDRERPIKKENKEHMRGTNKENEHRDARDFEPHSKKEQFLNKKQKLHIRGDDPAEISNQSKLSGAVPSSSTYDEKGAMKSYSQDLAIVDRVKEKLNASEYQEFLRCLNLFSKEIISRPELQSLVGNLIGVYPDLMDSFIEFLVQCEKNEGLLSGILTKSKSTYLLQGEGKYPQPSLDNDRDQEHKRDDGLRDRDHEKERLEKAAANLKWAKPISELDLSNCEQCTPSYRLLPKNYPISIASQKTEIGKLVLNDHWVSVTSGSEDYSFSHMRKNQYEESLFKCEDDRFELDMLLESVNSTTKHVEELLTKINSNELKTNSPIRVEDHLTALNLRCIERLYGDHGLDVMDVLKKNVSLALPVILTRLKQKQEEWARCRSDFDKVWAEIYAKNYYKSLDHRSFYFKQQDSKKLSMKALLAEIKEITEKKREDDSLLAFAAGNRLSISPDLEFDYPDHDLHEDLYQLIKYSCAEMCSTEQLDKVMKIWTTFVEQIFGVPSRPQGAEDQEDVVKSMNQNVKSGSSSAGESEGSPHNYASVADSRRSKSSRKANEHSQLGQTSNSERDGAAGRTSDALCETAQHEKMLKNVVTSDEKPESKQAVSIERAHDSTALAVDGLLDQSNGGSSIVHMTGHCNNNLKPVTCGTELELKMNDGNGPKLEVGNKKLLTNGIAVEITSDQEMAGTSKVEREEGELSPNGDFEEDNFAVYAKTDFETFSKANDSTGNNISGDRSREGEPSCLETRAENDAEGDENAARSSEDSRNEYENGDVSGTESGGGEDPEDDLDNNNKGESEGEAECMADAHDAEENGSALPVSARFLLHVKPLVKYVPSAIALHDKDKDSLKNSQVFYGNDSFYVLFRLHRILYERILSAKVNSSSPEGKWRTSNTKNPTDSYARFMTALYNLLDGTSDNAKFEDDCRAIIGTQSYILFTLDKLIHKFIKHLQVVVADEMDNKLLQLYFYEKSRRPETIFDAVYYDNTRVLLPDENIYRIECRLSTPAKLSIQLMCNGLDKPDVTSVSIDPTFAAYLHNDFLSIQPNAREDRRIYLNRNKRKVCREDEQLYSTDEVKIKNGLECKIACGSSKVSYVLETEDLLVRVKKRRKTLCHNQDSWVRQMRLQYYKNNFL</sequence>
<comment type="function">
    <text evidence="4">Acts as a transcriptional repressor. Interacts with ERF7 to repress genes in abscisic acid and drought stress responses. The heterodimer represses transcription by tethering SNL3 to DNA.</text>
</comment>
<comment type="subunit">
    <text evidence="4">Interacts with ERF7 and the histone deacetylase HDA19.</text>
</comment>
<comment type="subcellular location">
    <subcellularLocation>
        <location evidence="2">Nucleus</location>
    </subcellularLocation>
</comment>
<comment type="alternative products">
    <event type="alternative splicing"/>
    <isoform>
        <id>O48686-1</id>
        <name>1</name>
        <sequence type="displayed"/>
    </isoform>
    <text>A number of isoforms are produced. According to EST sequences.</text>
</comment>
<comment type="domain">
    <text>The PHA domains are required for interactions with ERF7 and HDA19.</text>
</comment>
<comment type="miscellaneous">
    <text>Loss-of-function mutant (antisense inhibition) leads to abscisic acid hypersensitivity in germination.</text>
</comment>
<comment type="sequence caution" evidence="5">
    <conflict type="erroneous gene model prediction">
        <sequence resource="EMBL-CDS" id="AAC00578"/>
    </conflict>
</comment>
<reference key="1">
    <citation type="journal article" date="2000" name="Nature">
        <title>Sequence and analysis of chromosome 1 of the plant Arabidopsis thaliana.</title>
        <authorList>
            <person name="Theologis A."/>
            <person name="Ecker J.R."/>
            <person name="Palm C.J."/>
            <person name="Federspiel N.A."/>
            <person name="Kaul S."/>
            <person name="White O."/>
            <person name="Alonso J."/>
            <person name="Altafi H."/>
            <person name="Araujo R."/>
            <person name="Bowman C.L."/>
            <person name="Brooks S.Y."/>
            <person name="Buehler E."/>
            <person name="Chan A."/>
            <person name="Chao Q."/>
            <person name="Chen H."/>
            <person name="Cheuk R.F."/>
            <person name="Chin C.W."/>
            <person name="Chung M.K."/>
            <person name="Conn L."/>
            <person name="Conway A.B."/>
            <person name="Conway A.R."/>
            <person name="Creasy T.H."/>
            <person name="Dewar K."/>
            <person name="Dunn P."/>
            <person name="Etgu P."/>
            <person name="Feldblyum T.V."/>
            <person name="Feng J.-D."/>
            <person name="Fong B."/>
            <person name="Fujii C.Y."/>
            <person name="Gill J.E."/>
            <person name="Goldsmith A.D."/>
            <person name="Haas B."/>
            <person name="Hansen N.F."/>
            <person name="Hughes B."/>
            <person name="Huizar L."/>
            <person name="Hunter J.L."/>
            <person name="Jenkins J."/>
            <person name="Johnson-Hopson C."/>
            <person name="Khan S."/>
            <person name="Khaykin E."/>
            <person name="Kim C.J."/>
            <person name="Koo H.L."/>
            <person name="Kremenetskaia I."/>
            <person name="Kurtz D.B."/>
            <person name="Kwan A."/>
            <person name="Lam B."/>
            <person name="Langin-Hooper S."/>
            <person name="Lee A."/>
            <person name="Lee J.M."/>
            <person name="Lenz C.A."/>
            <person name="Li J.H."/>
            <person name="Li Y.-P."/>
            <person name="Lin X."/>
            <person name="Liu S.X."/>
            <person name="Liu Z.A."/>
            <person name="Luros J.S."/>
            <person name="Maiti R."/>
            <person name="Marziali A."/>
            <person name="Militscher J."/>
            <person name="Miranda M."/>
            <person name="Nguyen M."/>
            <person name="Nierman W.C."/>
            <person name="Osborne B.I."/>
            <person name="Pai G."/>
            <person name="Peterson J."/>
            <person name="Pham P.K."/>
            <person name="Rizzo M."/>
            <person name="Rooney T."/>
            <person name="Rowley D."/>
            <person name="Sakano H."/>
            <person name="Salzberg S.L."/>
            <person name="Schwartz J.R."/>
            <person name="Shinn P."/>
            <person name="Southwick A.M."/>
            <person name="Sun H."/>
            <person name="Tallon L.J."/>
            <person name="Tambunga G."/>
            <person name="Toriumi M.J."/>
            <person name="Town C.D."/>
            <person name="Utterback T."/>
            <person name="Van Aken S."/>
            <person name="Vaysberg M."/>
            <person name="Vysotskaia V.S."/>
            <person name="Walker M."/>
            <person name="Wu D."/>
            <person name="Yu G."/>
            <person name="Fraser C.M."/>
            <person name="Venter J.C."/>
            <person name="Davis R.W."/>
        </authorList>
    </citation>
    <scope>NUCLEOTIDE SEQUENCE [LARGE SCALE GENOMIC DNA]</scope>
    <source>
        <strain>cv. Columbia</strain>
    </source>
</reference>
<reference key="2">
    <citation type="journal article" date="2017" name="Plant J.">
        <title>Araport11: a complete reannotation of the Arabidopsis thaliana reference genome.</title>
        <authorList>
            <person name="Cheng C.Y."/>
            <person name="Krishnakumar V."/>
            <person name="Chan A.P."/>
            <person name="Thibaud-Nissen F."/>
            <person name="Schobel S."/>
            <person name="Town C.D."/>
        </authorList>
    </citation>
    <scope>GENOME REANNOTATION</scope>
    <source>
        <strain>cv. Columbia</strain>
    </source>
</reference>
<reference key="3">
    <citation type="submission" date="2006-07" db="EMBL/GenBank/DDBJ databases">
        <title>Large-scale analysis of RIKEN Arabidopsis full-length (RAFL) cDNAs.</title>
        <authorList>
            <person name="Totoki Y."/>
            <person name="Seki M."/>
            <person name="Ishida J."/>
            <person name="Nakajima M."/>
            <person name="Enju A."/>
            <person name="Kamiya A."/>
            <person name="Narusaka M."/>
            <person name="Shin-i T."/>
            <person name="Nakagawa M."/>
            <person name="Sakamoto N."/>
            <person name="Oishi K."/>
            <person name="Kohara Y."/>
            <person name="Kobayashi M."/>
            <person name="Toyoda A."/>
            <person name="Sakaki Y."/>
            <person name="Sakurai T."/>
            <person name="Iida K."/>
            <person name="Akiyama K."/>
            <person name="Satou M."/>
            <person name="Toyoda T."/>
            <person name="Konagaya A."/>
            <person name="Carninci P."/>
            <person name="Kawai J."/>
            <person name="Hayashizaki Y."/>
            <person name="Shinozaki K."/>
        </authorList>
    </citation>
    <scope>NUCLEOTIDE SEQUENCE [LARGE SCALE MRNA] OF 605-1330</scope>
    <source>
        <strain>cv. Columbia</strain>
    </source>
</reference>
<reference key="4">
    <citation type="journal article" date="2005" name="Plant Cell">
        <title>Role of an Arabidopsis AP2/EREBP-type transcriptional repressor in abscisic acid and drought stress responses.</title>
        <authorList>
            <person name="Song C.-P."/>
            <person name="Agarwal M."/>
            <person name="Ohta M."/>
            <person name="Guo Y."/>
            <person name="Halfter U."/>
            <person name="Wang P."/>
            <person name="Zhu J.-K."/>
        </authorList>
    </citation>
    <scope>FUNCTION</scope>
    <scope>INTERACTION WITH ERF7 AND HDA19</scope>
</reference>
<reference key="5">
    <citation type="journal article" date="2010" name="J. Mol. Biol.">
        <title>PAH-domain-specific interactions of the Arabidopsis transcription coregulator SIN3-LIKE1 (SNL1) with telomere-binding protein 1 and ALWAYS EARLY2 Myb-DNA binding factors.</title>
        <authorList>
            <person name="Bowen A.J."/>
            <person name="Gonzalez D."/>
            <person name="Mullins J.G."/>
            <person name="Bhatt A.M."/>
            <person name="Martinez A."/>
            <person name="Conlan R.S."/>
        </authorList>
    </citation>
    <scope>GENE FAMILY</scope>
    <scope>NOMENCLATURE</scope>
</reference>
<name>SNL3_ARATH</name>
<accession>O48686</accession>
<accession>Q0WTD6</accession>
<gene>
    <name type="primary">SNL3</name>
    <name type="synonym">SIN3</name>
    <name type="ordered locus">At1g24190</name>
    <name type="ORF">F3I6.12</name>
</gene>
<feature type="chain" id="PRO_0000280073" description="Paired amphipathic helix protein Sin3-like 3">
    <location>
        <begin position="1"/>
        <end position="1330"/>
    </location>
</feature>
<feature type="domain" description="PAH 1" evidence="2">
    <location>
        <begin position="8"/>
        <end position="78"/>
    </location>
</feature>
<feature type="domain" description="PAH 2" evidence="2">
    <location>
        <begin position="94"/>
        <end position="164"/>
    </location>
</feature>
<feature type="domain" description="PAH 3" evidence="2">
    <location>
        <begin position="283"/>
        <end position="351"/>
    </location>
</feature>
<feature type="region of interest" description="Disordered" evidence="3">
    <location>
        <begin position="191"/>
        <end position="281"/>
    </location>
</feature>
<feature type="region of interest" description="Disordered" evidence="3">
    <location>
        <begin position="373"/>
        <end position="401"/>
    </location>
</feature>
<feature type="region of interest" description="Disordered" evidence="3">
    <location>
        <begin position="718"/>
        <end position="775"/>
    </location>
</feature>
<feature type="region of interest" description="Disordered" evidence="3">
    <location>
        <begin position="789"/>
        <end position="808"/>
    </location>
</feature>
<feature type="region of interest" description="Disordered" evidence="3">
    <location>
        <begin position="882"/>
        <end position="906"/>
    </location>
</feature>
<feature type="region of interest" description="Disordered" evidence="3">
    <location>
        <begin position="920"/>
        <end position="1002"/>
    </location>
</feature>
<feature type="compositionally biased region" description="Basic and acidic residues" evidence="3">
    <location>
        <begin position="191"/>
        <end position="246"/>
    </location>
</feature>
<feature type="compositionally biased region" description="Polar residues" evidence="3">
    <location>
        <begin position="262"/>
        <end position="277"/>
    </location>
</feature>
<feature type="compositionally biased region" description="Basic and acidic residues" evidence="3">
    <location>
        <begin position="383"/>
        <end position="401"/>
    </location>
</feature>
<feature type="compositionally biased region" description="Low complexity" evidence="3">
    <location>
        <begin position="723"/>
        <end position="734"/>
    </location>
</feature>
<feature type="compositionally biased region" description="Basic and acidic residues" evidence="3">
    <location>
        <begin position="789"/>
        <end position="800"/>
    </location>
</feature>
<feature type="compositionally biased region" description="Polar residues" evidence="3">
    <location>
        <begin position="920"/>
        <end position="932"/>
    </location>
</feature>
<feature type="compositionally biased region" description="Basic and acidic residues" evidence="3">
    <location>
        <begin position="933"/>
        <end position="949"/>
    </location>
</feature>
<feature type="compositionally biased region" description="Basic and acidic residues" evidence="3">
    <location>
        <begin position="956"/>
        <end position="968"/>
    </location>
</feature>
<feature type="compositionally biased region" description="Acidic residues" evidence="3">
    <location>
        <begin position="980"/>
        <end position="989"/>
    </location>
</feature>
<feature type="modified residue" description="Phosphoserine" evidence="1">
    <location>
        <position position="996"/>
    </location>
</feature>
<feature type="sequence conflict" description="In Ref. 3; BAE99612." evidence="5" ref="3">
    <original>Y</original>
    <variation>C</variation>
    <location>
        <position position="1060"/>
    </location>
</feature>
<organism>
    <name type="scientific">Arabidopsis thaliana</name>
    <name type="common">Mouse-ear cress</name>
    <dbReference type="NCBI Taxonomy" id="3702"/>
    <lineage>
        <taxon>Eukaryota</taxon>
        <taxon>Viridiplantae</taxon>
        <taxon>Streptophyta</taxon>
        <taxon>Embryophyta</taxon>
        <taxon>Tracheophyta</taxon>
        <taxon>Spermatophyta</taxon>
        <taxon>Magnoliopsida</taxon>
        <taxon>eudicotyledons</taxon>
        <taxon>Gunneridae</taxon>
        <taxon>Pentapetalae</taxon>
        <taxon>rosids</taxon>
        <taxon>malvids</taxon>
        <taxon>Brassicales</taxon>
        <taxon>Brassicaceae</taxon>
        <taxon>Camelineae</taxon>
        <taxon>Arabidopsis</taxon>
    </lineage>
</organism>
<keyword id="KW-0025">Alternative splicing</keyword>
<keyword id="KW-0539">Nucleus</keyword>
<keyword id="KW-0597">Phosphoprotein</keyword>
<keyword id="KW-1185">Reference proteome</keyword>
<keyword id="KW-0677">Repeat</keyword>
<keyword id="KW-0678">Repressor</keyword>
<keyword id="KW-0804">Transcription</keyword>
<keyword id="KW-0805">Transcription regulation</keyword>
<protein>
    <recommendedName>
        <fullName>Paired amphipathic helix protein Sin3-like 3</fullName>
    </recommendedName>
    <alternativeName>
        <fullName>Histone deacetylase complex subunit Sin3</fullName>
        <shortName>AtSin3</shortName>
    </alternativeName>
    <alternativeName>
        <fullName>Transcriptional corepressor Sin3</fullName>
    </alternativeName>
</protein>
<evidence type="ECO:0000250" key="1">
    <source>
        <dbReference type="UniProtKB" id="Q9LFQ3"/>
    </source>
</evidence>
<evidence type="ECO:0000255" key="2">
    <source>
        <dbReference type="PROSITE-ProRule" id="PRU00810"/>
    </source>
</evidence>
<evidence type="ECO:0000256" key="3">
    <source>
        <dbReference type="SAM" id="MobiDB-lite"/>
    </source>
</evidence>
<evidence type="ECO:0000269" key="4">
    <source>
    </source>
</evidence>
<evidence type="ECO:0000305" key="5"/>
<dbReference type="EMBL" id="AC002396">
    <property type="protein sequence ID" value="AAC00578.1"/>
    <property type="status" value="ALT_SEQ"/>
    <property type="molecule type" value="Genomic_DNA"/>
</dbReference>
<dbReference type="EMBL" id="CP002684">
    <property type="protein sequence ID" value="AEE30493.1"/>
    <property type="molecule type" value="Genomic_DNA"/>
</dbReference>
<dbReference type="EMBL" id="AK227621">
    <property type="protein sequence ID" value="BAE99612.1"/>
    <property type="molecule type" value="mRNA"/>
</dbReference>
<dbReference type="PIR" id="T00649">
    <property type="entry name" value="T00649"/>
</dbReference>
<dbReference type="RefSeq" id="NP_173829.3">
    <molecule id="O48686-1"/>
    <property type="nucleotide sequence ID" value="NM_102265.3"/>
</dbReference>
<dbReference type="SMR" id="O48686"/>
<dbReference type="BioGRID" id="24270">
    <property type="interactions" value="3"/>
</dbReference>
<dbReference type="FunCoup" id="O48686">
    <property type="interactions" value="4028"/>
</dbReference>
<dbReference type="IntAct" id="O48686">
    <property type="interactions" value="1"/>
</dbReference>
<dbReference type="STRING" id="3702.O48686"/>
<dbReference type="iPTMnet" id="O48686"/>
<dbReference type="PaxDb" id="3702-AT1G24190.1"/>
<dbReference type="ProteomicsDB" id="228450">
    <molecule id="O48686-1"/>
</dbReference>
<dbReference type="EnsemblPlants" id="AT1G24190.1">
    <molecule id="O48686-1"/>
    <property type="protein sequence ID" value="AT1G24190.1"/>
    <property type="gene ID" value="AT1G24190"/>
</dbReference>
<dbReference type="GeneID" id="839032"/>
<dbReference type="Gramene" id="AT1G24190.1">
    <molecule id="O48686-1"/>
    <property type="protein sequence ID" value="AT1G24190.1"/>
    <property type="gene ID" value="AT1G24190"/>
</dbReference>
<dbReference type="KEGG" id="ath:AT1G24190"/>
<dbReference type="Araport" id="AT1G24190"/>
<dbReference type="TAIR" id="AT1G24190">
    <property type="gene designation" value="SNL3"/>
</dbReference>
<dbReference type="eggNOG" id="KOG4204">
    <property type="taxonomic scope" value="Eukaryota"/>
</dbReference>
<dbReference type="InParanoid" id="O48686"/>
<dbReference type="PRO" id="PR:O48686"/>
<dbReference type="Proteomes" id="UP000006548">
    <property type="component" value="Chromosome 1"/>
</dbReference>
<dbReference type="ExpressionAtlas" id="O48686">
    <property type="expression patterns" value="baseline and differential"/>
</dbReference>
<dbReference type="GO" id="GO:0005634">
    <property type="term" value="C:nucleus"/>
    <property type="evidence" value="ECO:0007669"/>
    <property type="project" value="UniProtKB-SubCell"/>
</dbReference>
<dbReference type="GO" id="GO:0003714">
    <property type="term" value="F:transcription corepressor activity"/>
    <property type="evidence" value="ECO:0007669"/>
    <property type="project" value="InterPro"/>
</dbReference>
<dbReference type="GO" id="GO:0045892">
    <property type="term" value="P:negative regulation of DNA-templated transcription"/>
    <property type="evidence" value="ECO:0000314"/>
    <property type="project" value="TAIR"/>
</dbReference>
<dbReference type="GO" id="GO:0009737">
    <property type="term" value="P:response to abscisic acid"/>
    <property type="evidence" value="ECO:0000315"/>
    <property type="project" value="TAIR"/>
</dbReference>
<dbReference type="FunFam" id="1.20.1160.11:FF:000002">
    <property type="entry name" value="Paired amphipathic helix protein SIN3"/>
    <property type="match status" value="1"/>
</dbReference>
<dbReference type="FunFam" id="1.20.1160.11:FF:000001">
    <property type="entry name" value="Paired amphipathic helix protein Sin3"/>
    <property type="match status" value="1"/>
</dbReference>
<dbReference type="FunFam" id="1.20.1160.11:FF:000003">
    <property type="entry name" value="Paired amphipathic helix SIN3-like protein"/>
    <property type="match status" value="1"/>
</dbReference>
<dbReference type="Gene3D" id="1.20.1160.11">
    <property type="entry name" value="Paired amphipathic helix"/>
    <property type="match status" value="3"/>
</dbReference>
<dbReference type="InterPro" id="IPR013194">
    <property type="entry name" value="HDAC_interact_dom"/>
</dbReference>
<dbReference type="InterPro" id="IPR003822">
    <property type="entry name" value="PAH"/>
</dbReference>
<dbReference type="InterPro" id="IPR036600">
    <property type="entry name" value="PAH_sf"/>
</dbReference>
<dbReference type="InterPro" id="IPR039774">
    <property type="entry name" value="Sin3-like"/>
</dbReference>
<dbReference type="InterPro" id="IPR031693">
    <property type="entry name" value="Sin3_C"/>
</dbReference>
<dbReference type="PANTHER" id="PTHR12346:SF0">
    <property type="entry name" value="SIN3A, ISOFORM G"/>
    <property type="match status" value="1"/>
</dbReference>
<dbReference type="PANTHER" id="PTHR12346">
    <property type="entry name" value="SIN3B-RELATED"/>
    <property type="match status" value="1"/>
</dbReference>
<dbReference type="Pfam" id="PF02671">
    <property type="entry name" value="PAH"/>
    <property type="match status" value="3"/>
</dbReference>
<dbReference type="Pfam" id="PF08295">
    <property type="entry name" value="Sin3_corepress"/>
    <property type="match status" value="1"/>
</dbReference>
<dbReference type="Pfam" id="PF16879">
    <property type="entry name" value="Sin3a_C"/>
    <property type="match status" value="1"/>
</dbReference>
<dbReference type="SMART" id="SM00761">
    <property type="entry name" value="HDAC_interact"/>
    <property type="match status" value="1"/>
</dbReference>
<dbReference type="SUPFAM" id="SSF47762">
    <property type="entry name" value="PAH2 domain"/>
    <property type="match status" value="3"/>
</dbReference>
<dbReference type="PROSITE" id="PS51477">
    <property type="entry name" value="PAH"/>
    <property type="match status" value="3"/>
</dbReference>
<proteinExistence type="evidence at protein level"/>